<name>Y1934_BURO1</name>
<accession>Q1BU68</accession>
<feature type="chain" id="PRO_0000291071" description="UPF0434 protein Bcen_1934">
    <location>
        <begin position="1"/>
        <end position="64"/>
    </location>
</feature>
<gene>
    <name type="ordered locus">Bcen_1934</name>
</gene>
<protein>
    <recommendedName>
        <fullName evidence="1">UPF0434 protein Bcen_1934</fullName>
    </recommendedName>
</protein>
<comment type="similarity">
    <text evidence="1">Belongs to the UPF0434 family.</text>
</comment>
<evidence type="ECO:0000255" key="1">
    <source>
        <dbReference type="HAMAP-Rule" id="MF_01187"/>
    </source>
</evidence>
<sequence length="64" mass="7032">MDARLLEIIVCPICKGPLHYDRAAQELICNADKLAYPIRDGIPVMLVDEARQTVEGTPVDPAGR</sequence>
<dbReference type="EMBL" id="CP000378">
    <property type="protein sequence ID" value="ABF76837.1"/>
    <property type="molecule type" value="Genomic_DNA"/>
</dbReference>
<dbReference type="SMR" id="Q1BU68"/>
<dbReference type="HOGENOM" id="CLU_155659_3_0_4"/>
<dbReference type="GO" id="GO:0005829">
    <property type="term" value="C:cytosol"/>
    <property type="evidence" value="ECO:0007669"/>
    <property type="project" value="TreeGrafter"/>
</dbReference>
<dbReference type="FunFam" id="2.20.25.10:FF:000002">
    <property type="entry name" value="UPF0434 protein YcaR"/>
    <property type="match status" value="1"/>
</dbReference>
<dbReference type="Gene3D" id="2.20.25.10">
    <property type="match status" value="1"/>
</dbReference>
<dbReference type="HAMAP" id="MF_01187">
    <property type="entry name" value="UPF0434"/>
    <property type="match status" value="1"/>
</dbReference>
<dbReference type="InterPro" id="IPR005651">
    <property type="entry name" value="Trm112-like"/>
</dbReference>
<dbReference type="PANTHER" id="PTHR33505:SF4">
    <property type="entry name" value="PROTEIN PREY, MITOCHONDRIAL"/>
    <property type="match status" value="1"/>
</dbReference>
<dbReference type="PANTHER" id="PTHR33505">
    <property type="entry name" value="ZGC:162634"/>
    <property type="match status" value="1"/>
</dbReference>
<dbReference type="Pfam" id="PF03966">
    <property type="entry name" value="Trm112p"/>
    <property type="match status" value="1"/>
</dbReference>
<dbReference type="SUPFAM" id="SSF158997">
    <property type="entry name" value="Trm112p-like"/>
    <property type="match status" value="1"/>
</dbReference>
<proteinExistence type="inferred from homology"/>
<organism>
    <name type="scientific">Burkholderia orbicola (strain AU 1054)</name>
    <dbReference type="NCBI Taxonomy" id="331271"/>
    <lineage>
        <taxon>Bacteria</taxon>
        <taxon>Pseudomonadati</taxon>
        <taxon>Pseudomonadota</taxon>
        <taxon>Betaproteobacteria</taxon>
        <taxon>Burkholderiales</taxon>
        <taxon>Burkholderiaceae</taxon>
        <taxon>Burkholderia</taxon>
        <taxon>Burkholderia cepacia complex</taxon>
        <taxon>Burkholderia orbicola</taxon>
    </lineage>
</organism>
<reference key="1">
    <citation type="submission" date="2006-05" db="EMBL/GenBank/DDBJ databases">
        <title>Complete sequence of chromosome 1 of Burkholderia cenocepacia AU 1054.</title>
        <authorList>
            <consortium name="US DOE Joint Genome Institute"/>
            <person name="Copeland A."/>
            <person name="Lucas S."/>
            <person name="Lapidus A."/>
            <person name="Barry K."/>
            <person name="Detter J.C."/>
            <person name="Glavina del Rio T."/>
            <person name="Hammon N."/>
            <person name="Israni S."/>
            <person name="Dalin E."/>
            <person name="Tice H."/>
            <person name="Pitluck S."/>
            <person name="Chain P."/>
            <person name="Malfatti S."/>
            <person name="Shin M."/>
            <person name="Vergez L."/>
            <person name="Schmutz J."/>
            <person name="Larimer F."/>
            <person name="Land M."/>
            <person name="Hauser L."/>
            <person name="Kyrpides N."/>
            <person name="Lykidis A."/>
            <person name="LiPuma J.J."/>
            <person name="Konstantinidis K."/>
            <person name="Tiedje J.M."/>
            <person name="Richardson P."/>
        </authorList>
    </citation>
    <scope>NUCLEOTIDE SEQUENCE [LARGE SCALE GENOMIC DNA]</scope>
    <source>
        <strain>AU 1054</strain>
    </source>
</reference>